<evidence type="ECO:0000250" key="1"/>
<evidence type="ECO:0000269" key="2">
    <source>
    </source>
</evidence>
<evidence type="ECO:0000305" key="3"/>
<sequence>MACGEFSLIARYFDRVRSSRLDVETGIGDDCALLNIPEKQTLAISTDTLVAGNHFLPDIDPADLAYKALAVNLSDLAAMGADPAWLTLALTLPEVDEPWLEAFSDSLFALLNYYDMQLIGGDTTRGPLSMTLGIHGYIPAGRALKRSGAKPGDWIYVTGTPGDSAAGLAVLQNRLQVSEETDAHYLIQRHLRPTPRILHGQALRDIASAAIDLSDGLISDLGHIVKASGCGARVDVDALPKSDAMMRHVDDGQALRWALSGGEDYELCFTVPELNRGALDVAIGQLGVPFTCIGQMSADIEGLNFVRDGMPVTFDWKGYDHFATP</sequence>
<reference key="1">
    <citation type="journal article" date="1997" name="J. Biol. Chem.">
        <title>Characterization of thiL, encoding thiamin-monophosphate kinase, in Salmonella typhimurium.</title>
        <authorList>
            <person name="Webb E."/>
            <person name="Downs D."/>
        </authorList>
    </citation>
    <scope>NUCLEOTIDE SEQUENCE [GENOMIC DNA]</scope>
    <scope>FUNCTION</scope>
    <scope>CATALYTIC ACTIVITY</scope>
    <scope>INDUCTION</scope>
    <source>
        <strain>LT2</strain>
    </source>
</reference>
<reference key="2">
    <citation type="journal article" date="2001" name="Nature">
        <title>Complete genome sequence of Salmonella enterica serovar Typhimurium LT2.</title>
        <authorList>
            <person name="McClelland M."/>
            <person name="Sanderson K.E."/>
            <person name="Spieth J."/>
            <person name="Clifton S.W."/>
            <person name="Latreille P."/>
            <person name="Courtney L."/>
            <person name="Porwollik S."/>
            <person name="Ali J."/>
            <person name="Dante M."/>
            <person name="Du F."/>
            <person name="Hou S."/>
            <person name="Layman D."/>
            <person name="Leonard S."/>
            <person name="Nguyen C."/>
            <person name="Scott K."/>
            <person name="Holmes A."/>
            <person name="Grewal N."/>
            <person name="Mulvaney E."/>
            <person name="Ryan E."/>
            <person name="Sun H."/>
            <person name="Florea L."/>
            <person name="Miller W."/>
            <person name="Stoneking T."/>
            <person name="Nhan M."/>
            <person name="Waterston R."/>
            <person name="Wilson R.K."/>
        </authorList>
    </citation>
    <scope>NUCLEOTIDE SEQUENCE [LARGE SCALE GENOMIC DNA]</scope>
    <source>
        <strain>LT2 / SGSC1412 / ATCC 700720</strain>
    </source>
</reference>
<keyword id="KW-0067">ATP-binding</keyword>
<keyword id="KW-0418">Kinase</keyword>
<keyword id="KW-0460">Magnesium</keyword>
<keyword id="KW-0479">Metal-binding</keyword>
<keyword id="KW-0547">Nucleotide-binding</keyword>
<keyword id="KW-1185">Reference proteome</keyword>
<keyword id="KW-0784">Thiamine biosynthesis</keyword>
<keyword id="KW-0808">Transferase</keyword>
<feature type="chain" id="PRO_0000096198" description="Thiamine-monophosphate kinase">
    <location>
        <begin position="1"/>
        <end position="325"/>
    </location>
</feature>
<feature type="binding site" evidence="1">
    <location>
        <position position="30"/>
    </location>
    <ligand>
        <name>Mg(2+)</name>
        <dbReference type="ChEBI" id="CHEBI:18420"/>
        <label>3</label>
    </ligand>
</feature>
<feature type="binding site" evidence="1">
    <location>
        <position position="30"/>
    </location>
    <ligand>
        <name>Mg(2+)</name>
        <dbReference type="ChEBI" id="CHEBI:18420"/>
        <label>4</label>
    </ligand>
</feature>
<feature type="binding site" evidence="1">
    <location>
        <position position="45"/>
    </location>
    <ligand>
        <name>Mg(2+)</name>
        <dbReference type="ChEBI" id="CHEBI:18420"/>
        <label>4</label>
    </ligand>
</feature>
<feature type="binding site" evidence="1">
    <location>
        <position position="46"/>
    </location>
    <ligand>
        <name>Mg(2+)</name>
        <dbReference type="ChEBI" id="CHEBI:18420"/>
        <label>1</label>
    </ligand>
</feature>
<feature type="binding site" evidence="1">
    <location>
        <position position="47"/>
    </location>
    <ligand>
        <name>Mg(2+)</name>
        <dbReference type="ChEBI" id="CHEBI:18420"/>
        <label>1</label>
    </ligand>
</feature>
<feature type="binding site" evidence="1">
    <location>
        <position position="47"/>
    </location>
    <ligand>
        <name>Mg(2+)</name>
        <dbReference type="ChEBI" id="CHEBI:18420"/>
        <label>2</label>
    </ligand>
</feature>
<feature type="binding site" evidence="1">
    <location>
        <position position="54"/>
    </location>
    <ligand>
        <name>substrate</name>
    </ligand>
</feature>
<feature type="binding site" evidence="1">
    <location>
        <position position="75"/>
    </location>
    <ligand>
        <name>Mg(2+)</name>
        <dbReference type="ChEBI" id="CHEBI:18420"/>
        <label>2</label>
    </ligand>
</feature>
<feature type="binding site" evidence="1">
    <location>
        <position position="75"/>
    </location>
    <ligand>
        <name>Mg(2+)</name>
        <dbReference type="ChEBI" id="CHEBI:18420"/>
        <label>3</label>
    </ligand>
</feature>
<feature type="binding site" evidence="1">
    <location>
        <position position="75"/>
    </location>
    <ligand>
        <name>Mg(2+)</name>
        <dbReference type="ChEBI" id="CHEBI:18420"/>
        <label>4</label>
    </ligand>
</feature>
<feature type="binding site" evidence="1">
    <location>
        <begin position="121"/>
        <end position="122"/>
    </location>
    <ligand>
        <name>ATP</name>
        <dbReference type="ChEBI" id="CHEBI:30616"/>
    </ligand>
</feature>
<feature type="binding site" evidence="1">
    <location>
        <position position="122"/>
    </location>
    <ligand>
        <name>Mg(2+)</name>
        <dbReference type="ChEBI" id="CHEBI:18420"/>
        <label>1</label>
    </ligand>
</feature>
<feature type="binding site" evidence="1">
    <location>
        <position position="146"/>
    </location>
    <ligand>
        <name>ATP</name>
        <dbReference type="ChEBI" id="CHEBI:30616"/>
    </ligand>
</feature>
<feature type="binding site" evidence="1">
    <location>
        <position position="212"/>
    </location>
    <ligand>
        <name>Mg(2+)</name>
        <dbReference type="ChEBI" id="CHEBI:18420"/>
        <label>3</label>
    </ligand>
</feature>
<feature type="binding site" evidence="1">
    <location>
        <position position="214"/>
    </location>
    <ligand>
        <name>ATP</name>
        <dbReference type="ChEBI" id="CHEBI:30616"/>
    </ligand>
</feature>
<feature type="binding site" evidence="1">
    <location>
        <position position="215"/>
    </location>
    <ligand>
        <name>Mg(2+)</name>
        <dbReference type="ChEBI" id="CHEBI:18420"/>
        <label>5</label>
    </ligand>
</feature>
<feature type="binding site" evidence="1">
    <location>
        <position position="263"/>
    </location>
    <ligand>
        <name>substrate</name>
    </ligand>
</feature>
<feature type="binding site" evidence="1">
    <location>
        <position position="319"/>
    </location>
    <ligand>
        <name>substrate</name>
    </ligand>
</feature>
<protein>
    <recommendedName>
        <fullName>Thiamine-monophosphate kinase</fullName>
        <shortName>TMP kinase</shortName>
        <shortName>Thiamine-phosphate kinase</shortName>
        <ecNumber>2.7.4.16</ecNumber>
    </recommendedName>
</protein>
<organism>
    <name type="scientific">Salmonella typhimurium (strain LT2 / SGSC1412 / ATCC 700720)</name>
    <dbReference type="NCBI Taxonomy" id="99287"/>
    <lineage>
        <taxon>Bacteria</taxon>
        <taxon>Pseudomonadati</taxon>
        <taxon>Pseudomonadota</taxon>
        <taxon>Gammaproteobacteria</taxon>
        <taxon>Enterobacterales</taxon>
        <taxon>Enterobacteriaceae</taxon>
        <taxon>Salmonella</taxon>
    </lineage>
</organism>
<proteinExistence type="evidence at protein level"/>
<accession>P55881</accession>
<comment type="function">
    <text evidence="2">Catalyzes the ATP-dependent phosphorylation of thiamine-monophosphate (TMP) to form thiamine-pyrophosphate (TPP), the active form of vitamin B1.</text>
</comment>
<comment type="catalytic activity">
    <reaction evidence="2">
        <text>thiamine phosphate + ATP = thiamine diphosphate + ADP</text>
        <dbReference type="Rhea" id="RHEA:15913"/>
        <dbReference type="ChEBI" id="CHEBI:30616"/>
        <dbReference type="ChEBI" id="CHEBI:37575"/>
        <dbReference type="ChEBI" id="CHEBI:58937"/>
        <dbReference type="ChEBI" id="CHEBI:456216"/>
        <dbReference type="EC" id="2.7.4.16"/>
    </reaction>
</comment>
<comment type="pathway">
    <text>Cofactor biosynthesis; thiamine diphosphate biosynthesis; thiamine diphosphate from thiamine phosphate: step 1/1.</text>
</comment>
<comment type="induction">
    <text evidence="2">In contrast to other thiamine biosynthetic genes, thiL is not transcriptionally regulated by thiamine-pyrophosphate. Appears to be constitutively expressed.</text>
</comment>
<comment type="miscellaneous">
    <text evidence="1">Reaction mechanism of ThiL seems to utilize a direct, inline transfer of the gamma-phosphate of ATP to TMP rather than a phosphorylated enzyme intermediate.</text>
</comment>
<comment type="similarity">
    <text evidence="3">Belongs to the thiamine-monophosphate kinase family.</text>
</comment>
<gene>
    <name type="primary">thiL</name>
    <name type="ordered locus">STM0419</name>
</gene>
<dbReference type="EC" id="2.7.4.16"/>
<dbReference type="EMBL" id="U74758">
    <property type="protein sequence ID" value="AAB37319.1"/>
    <property type="molecule type" value="Genomic_DNA"/>
</dbReference>
<dbReference type="EMBL" id="AE006468">
    <property type="protein sequence ID" value="AAL19373.1"/>
    <property type="molecule type" value="Genomic_DNA"/>
</dbReference>
<dbReference type="PIR" id="T47117">
    <property type="entry name" value="T47117"/>
</dbReference>
<dbReference type="RefSeq" id="NP_459414.1">
    <property type="nucleotide sequence ID" value="NC_003197.2"/>
</dbReference>
<dbReference type="RefSeq" id="WP_000752138.1">
    <property type="nucleotide sequence ID" value="NC_003197.2"/>
</dbReference>
<dbReference type="SMR" id="P55881"/>
<dbReference type="STRING" id="99287.STM0419"/>
<dbReference type="PaxDb" id="99287-STM0419"/>
<dbReference type="DNASU" id="1251938"/>
<dbReference type="GeneID" id="1251938"/>
<dbReference type="KEGG" id="stm:STM0419"/>
<dbReference type="PATRIC" id="fig|99287.12.peg.448"/>
<dbReference type="HOGENOM" id="CLU_046964_3_0_6"/>
<dbReference type="OMA" id="HFRRDWS"/>
<dbReference type="PhylomeDB" id="P55881"/>
<dbReference type="BioCyc" id="SENT99287:STM0419-MONOMER"/>
<dbReference type="BRENDA" id="2.7.4.16">
    <property type="organism ID" value="5542"/>
</dbReference>
<dbReference type="UniPathway" id="UPA00060">
    <property type="reaction ID" value="UER00142"/>
</dbReference>
<dbReference type="Proteomes" id="UP000001014">
    <property type="component" value="Chromosome"/>
</dbReference>
<dbReference type="GO" id="GO:0005524">
    <property type="term" value="F:ATP binding"/>
    <property type="evidence" value="ECO:0007669"/>
    <property type="project" value="UniProtKB-UniRule"/>
</dbReference>
<dbReference type="GO" id="GO:0000287">
    <property type="term" value="F:magnesium ion binding"/>
    <property type="evidence" value="ECO:0007669"/>
    <property type="project" value="UniProtKB-UniRule"/>
</dbReference>
<dbReference type="GO" id="GO:0009030">
    <property type="term" value="F:thiamine-phosphate kinase activity"/>
    <property type="evidence" value="ECO:0000318"/>
    <property type="project" value="GO_Central"/>
</dbReference>
<dbReference type="GO" id="GO:0009228">
    <property type="term" value="P:thiamine biosynthetic process"/>
    <property type="evidence" value="ECO:0000318"/>
    <property type="project" value="GO_Central"/>
</dbReference>
<dbReference type="GO" id="GO:0009229">
    <property type="term" value="P:thiamine diphosphate biosynthetic process"/>
    <property type="evidence" value="ECO:0000318"/>
    <property type="project" value="GO_Central"/>
</dbReference>
<dbReference type="CDD" id="cd02194">
    <property type="entry name" value="ThiL"/>
    <property type="match status" value="1"/>
</dbReference>
<dbReference type="FunFam" id="3.30.1330.10:FF:000008">
    <property type="entry name" value="Thiamine-monophosphate kinase"/>
    <property type="match status" value="1"/>
</dbReference>
<dbReference type="FunFam" id="3.90.650.10:FF:000012">
    <property type="entry name" value="Thiamine-monophosphate kinase"/>
    <property type="match status" value="1"/>
</dbReference>
<dbReference type="Gene3D" id="3.90.650.10">
    <property type="entry name" value="PurM-like C-terminal domain"/>
    <property type="match status" value="1"/>
</dbReference>
<dbReference type="Gene3D" id="3.30.1330.10">
    <property type="entry name" value="PurM-like, N-terminal domain"/>
    <property type="match status" value="1"/>
</dbReference>
<dbReference type="HAMAP" id="MF_02128">
    <property type="entry name" value="TMP_kinase"/>
    <property type="match status" value="1"/>
</dbReference>
<dbReference type="InterPro" id="IPR010918">
    <property type="entry name" value="PurM-like_C_dom"/>
</dbReference>
<dbReference type="InterPro" id="IPR036676">
    <property type="entry name" value="PurM-like_C_sf"/>
</dbReference>
<dbReference type="InterPro" id="IPR016188">
    <property type="entry name" value="PurM-like_N"/>
</dbReference>
<dbReference type="InterPro" id="IPR036921">
    <property type="entry name" value="PurM-like_N_sf"/>
</dbReference>
<dbReference type="InterPro" id="IPR006283">
    <property type="entry name" value="ThiL-like"/>
</dbReference>
<dbReference type="NCBIfam" id="NF004350">
    <property type="entry name" value="PRK05731.1-1"/>
    <property type="match status" value="1"/>
</dbReference>
<dbReference type="NCBIfam" id="TIGR01379">
    <property type="entry name" value="thiL"/>
    <property type="match status" value="1"/>
</dbReference>
<dbReference type="PANTHER" id="PTHR30270">
    <property type="entry name" value="THIAMINE-MONOPHOSPHATE KINASE"/>
    <property type="match status" value="1"/>
</dbReference>
<dbReference type="PANTHER" id="PTHR30270:SF0">
    <property type="entry name" value="THIAMINE-MONOPHOSPHATE KINASE"/>
    <property type="match status" value="1"/>
</dbReference>
<dbReference type="Pfam" id="PF00586">
    <property type="entry name" value="AIRS"/>
    <property type="match status" value="1"/>
</dbReference>
<dbReference type="Pfam" id="PF02769">
    <property type="entry name" value="AIRS_C"/>
    <property type="match status" value="1"/>
</dbReference>
<dbReference type="PIRSF" id="PIRSF005303">
    <property type="entry name" value="Thiam_monoph_kin"/>
    <property type="match status" value="1"/>
</dbReference>
<dbReference type="SUPFAM" id="SSF56042">
    <property type="entry name" value="PurM C-terminal domain-like"/>
    <property type="match status" value="1"/>
</dbReference>
<dbReference type="SUPFAM" id="SSF55326">
    <property type="entry name" value="PurM N-terminal domain-like"/>
    <property type="match status" value="1"/>
</dbReference>
<name>THIL_SALTY</name>